<protein>
    <recommendedName>
        <fullName evidence="1">GDP-L-fucose synthase</fullName>
        <ecNumber evidence="1">1.1.1.271</ecNumber>
    </recommendedName>
    <alternativeName>
        <fullName evidence="1">GDP-4-keto-6-deoxy-D-mannose-3,5-epimerase-4-reductase</fullName>
    </alternativeName>
</protein>
<accession>P55353</accession>
<gene>
    <name evidence="1" type="primary">fcl</name>
    <name type="ordered locus">NGR_a00420</name>
    <name type="ORF">y4aF</name>
</gene>
<evidence type="ECO:0000255" key="1">
    <source>
        <dbReference type="HAMAP-Rule" id="MF_00956"/>
    </source>
</evidence>
<proteinExistence type="inferred from homology"/>
<feature type="chain" id="PRO_0000174360" description="GDP-L-fucose synthase">
    <location>
        <begin position="1"/>
        <end position="314"/>
    </location>
</feature>
<feature type="active site" description="Proton donor/acceptor" evidence="1">
    <location>
        <position position="140"/>
    </location>
</feature>
<feature type="binding site" evidence="1">
    <location>
        <begin position="15"/>
        <end position="21"/>
    </location>
    <ligand>
        <name>NADP(+)</name>
        <dbReference type="ChEBI" id="CHEBI:58349"/>
    </ligand>
</feature>
<feature type="binding site" evidence="1">
    <location>
        <begin position="109"/>
        <end position="112"/>
    </location>
    <ligand>
        <name>NADP(+)</name>
        <dbReference type="ChEBI" id="CHEBI:58349"/>
    </ligand>
</feature>
<feature type="binding site" evidence="1">
    <location>
        <position position="144"/>
    </location>
    <ligand>
        <name>NADP(+)</name>
        <dbReference type="ChEBI" id="CHEBI:58349"/>
    </ligand>
</feature>
<feature type="binding site" evidence="1">
    <location>
        <begin position="167"/>
        <end position="170"/>
    </location>
    <ligand>
        <name>NADP(+)</name>
        <dbReference type="ChEBI" id="CHEBI:58349"/>
    </ligand>
</feature>
<feature type="binding site" evidence="1">
    <location>
        <position position="183"/>
    </location>
    <ligand>
        <name>NADP(+)</name>
        <dbReference type="ChEBI" id="CHEBI:58349"/>
    </ligand>
</feature>
<feature type="binding site" evidence="1">
    <location>
        <position position="191"/>
    </location>
    <ligand>
        <name>substrate</name>
    </ligand>
</feature>
<feature type="binding site" evidence="1">
    <location>
        <position position="206"/>
    </location>
    <ligand>
        <name>substrate</name>
    </ligand>
</feature>
<feature type="binding site" evidence="1">
    <location>
        <position position="213"/>
    </location>
    <ligand>
        <name>substrate</name>
    </ligand>
</feature>
<feature type="binding site" evidence="1">
    <location>
        <position position="273"/>
    </location>
    <ligand>
        <name>substrate</name>
    </ligand>
</feature>
<feature type="site" description="Important for catalytic activity" evidence="1">
    <location>
        <position position="111"/>
    </location>
</feature>
<feature type="site" description="Important for catalytic activity" evidence="1">
    <location>
        <position position="113"/>
    </location>
</feature>
<organism>
    <name type="scientific">Sinorhizobium fredii (strain NBRC 101917 / NGR234)</name>
    <dbReference type="NCBI Taxonomy" id="394"/>
    <lineage>
        <taxon>Bacteria</taxon>
        <taxon>Pseudomonadati</taxon>
        <taxon>Pseudomonadota</taxon>
        <taxon>Alphaproteobacteria</taxon>
        <taxon>Hyphomicrobiales</taxon>
        <taxon>Rhizobiaceae</taxon>
        <taxon>Sinorhizobium/Ensifer group</taxon>
        <taxon>Sinorhizobium</taxon>
    </lineage>
</organism>
<reference key="1">
    <citation type="journal article" date="1997" name="Nature">
        <title>Molecular basis of symbiosis between Rhizobium and legumes.</title>
        <authorList>
            <person name="Freiberg C.A."/>
            <person name="Fellay R."/>
            <person name="Bairoch A."/>
            <person name="Broughton W.J."/>
            <person name="Rosenthal A."/>
            <person name="Perret X."/>
        </authorList>
    </citation>
    <scope>NUCLEOTIDE SEQUENCE [LARGE SCALE GENOMIC DNA]</scope>
    <source>
        <strain>NBRC 101917 / NGR234</strain>
    </source>
</reference>
<reference key="2">
    <citation type="journal article" date="2009" name="Appl. Environ. Microbiol.">
        <title>Rhizobium sp. strain NGR234 possesses a remarkable number of secretion systems.</title>
        <authorList>
            <person name="Schmeisser C."/>
            <person name="Liesegang H."/>
            <person name="Krysciak D."/>
            <person name="Bakkou N."/>
            <person name="Le Quere A."/>
            <person name="Wollherr A."/>
            <person name="Heinemeyer I."/>
            <person name="Morgenstern B."/>
            <person name="Pommerening-Roeser A."/>
            <person name="Flores M."/>
            <person name="Palacios R."/>
            <person name="Brenner S."/>
            <person name="Gottschalk G."/>
            <person name="Schmitz R.A."/>
            <person name="Broughton W.J."/>
            <person name="Perret X."/>
            <person name="Strittmatter A.W."/>
            <person name="Streit W.R."/>
        </authorList>
    </citation>
    <scope>NUCLEOTIDE SEQUENCE [LARGE SCALE GENOMIC DNA]</scope>
    <source>
        <strain>NBRC 101917 / NGR234</strain>
    </source>
</reference>
<geneLocation type="plasmid">
    <name>sym pNGR234a</name>
</geneLocation>
<keyword id="KW-0413">Isomerase</keyword>
<keyword id="KW-0511">Multifunctional enzyme</keyword>
<keyword id="KW-0521">NADP</keyword>
<keyword id="KW-0536">Nodulation</keyword>
<keyword id="KW-0560">Oxidoreductase</keyword>
<keyword id="KW-0614">Plasmid</keyword>
<keyword id="KW-1185">Reference proteome</keyword>
<name>FCL_SINFN</name>
<comment type="function">
    <text evidence="1">Catalyzes the two-step NADP-dependent conversion of GDP-4-dehydro-6-deoxy-D-mannose to GDP-fucose, involving an epimerase and a reductase reaction.</text>
</comment>
<comment type="catalytic activity">
    <reaction evidence="1">
        <text>GDP-beta-L-fucose + NADP(+) = GDP-4-dehydro-alpha-D-rhamnose + NADPH + H(+)</text>
        <dbReference type="Rhea" id="RHEA:18885"/>
        <dbReference type="ChEBI" id="CHEBI:15378"/>
        <dbReference type="ChEBI" id="CHEBI:57273"/>
        <dbReference type="ChEBI" id="CHEBI:57783"/>
        <dbReference type="ChEBI" id="CHEBI:57964"/>
        <dbReference type="ChEBI" id="CHEBI:58349"/>
        <dbReference type="EC" id="1.1.1.271"/>
    </reaction>
</comment>
<comment type="pathway">
    <text evidence="1">Nucleotide-sugar biosynthesis; GDP-L-fucose biosynthesis via de novo pathway; GDP-L-fucose from GDP-alpha-D-mannose: step 2/2.</text>
</comment>
<comment type="similarity">
    <text evidence="1">Belongs to the NAD(P)-dependent epimerase/dehydratase family. Fucose synthase subfamily.</text>
</comment>
<dbReference type="EC" id="1.1.1.271" evidence="1"/>
<dbReference type="EMBL" id="U00090">
    <property type="protein sequence ID" value="AAB91603.1"/>
    <property type="molecule type" value="Genomic_DNA"/>
</dbReference>
<dbReference type="RefSeq" id="NP_443765.1">
    <property type="nucleotide sequence ID" value="NC_000914.2"/>
</dbReference>
<dbReference type="SMR" id="P55353"/>
<dbReference type="KEGG" id="rhi:NGR_a00420"/>
<dbReference type="PATRIC" id="fig|394.7.peg.39"/>
<dbReference type="eggNOG" id="COG0451">
    <property type="taxonomic scope" value="Bacteria"/>
</dbReference>
<dbReference type="HOGENOM" id="CLU_007383_18_0_5"/>
<dbReference type="OrthoDB" id="9811425at2"/>
<dbReference type="UniPathway" id="UPA00128">
    <property type="reaction ID" value="UER00191"/>
</dbReference>
<dbReference type="Proteomes" id="UP000001054">
    <property type="component" value="Plasmid pNGR234a"/>
</dbReference>
<dbReference type="GO" id="GO:0050577">
    <property type="term" value="F:GDP-L-fucose synthase activity"/>
    <property type="evidence" value="ECO:0007669"/>
    <property type="project" value="UniProtKB-UniRule"/>
</dbReference>
<dbReference type="GO" id="GO:0016853">
    <property type="term" value="F:isomerase activity"/>
    <property type="evidence" value="ECO:0007669"/>
    <property type="project" value="UniProtKB-KW"/>
</dbReference>
<dbReference type="GO" id="GO:0070401">
    <property type="term" value="F:NADP+ binding"/>
    <property type="evidence" value="ECO:0007669"/>
    <property type="project" value="UniProtKB-UniRule"/>
</dbReference>
<dbReference type="GO" id="GO:0042351">
    <property type="term" value="P:'de novo' GDP-L-fucose biosynthetic process"/>
    <property type="evidence" value="ECO:0007669"/>
    <property type="project" value="UniProtKB-UniRule"/>
</dbReference>
<dbReference type="CDD" id="cd05239">
    <property type="entry name" value="GDP_FS_SDR_e"/>
    <property type="match status" value="1"/>
</dbReference>
<dbReference type="FunFam" id="3.40.50.720:FF:000101">
    <property type="entry name" value="GDP-L-fucose synthase"/>
    <property type="match status" value="1"/>
</dbReference>
<dbReference type="Gene3D" id="3.40.50.720">
    <property type="entry name" value="NAD(P)-binding Rossmann-like Domain"/>
    <property type="match status" value="1"/>
</dbReference>
<dbReference type="Gene3D" id="3.90.25.10">
    <property type="entry name" value="UDP-galactose 4-epimerase, domain 1"/>
    <property type="match status" value="1"/>
</dbReference>
<dbReference type="HAMAP" id="MF_00956">
    <property type="entry name" value="GDP_fucose_synth"/>
    <property type="match status" value="1"/>
</dbReference>
<dbReference type="InterPro" id="IPR001509">
    <property type="entry name" value="Epimerase_deHydtase"/>
</dbReference>
<dbReference type="InterPro" id="IPR028614">
    <property type="entry name" value="GDP_fucose/colitose_synth"/>
</dbReference>
<dbReference type="InterPro" id="IPR036291">
    <property type="entry name" value="NAD(P)-bd_dom_sf"/>
</dbReference>
<dbReference type="PANTHER" id="PTHR43238">
    <property type="entry name" value="GDP-L-FUCOSE SYNTHASE"/>
    <property type="match status" value="1"/>
</dbReference>
<dbReference type="PANTHER" id="PTHR43238:SF1">
    <property type="entry name" value="GDP-L-FUCOSE SYNTHASE"/>
    <property type="match status" value="1"/>
</dbReference>
<dbReference type="Pfam" id="PF01370">
    <property type="entry name" value="Epimerase"/>
    <property type="match status" value="1"/>
</dbReference>
<dbReference type="SUPFAM" id="SSF51735">
    <property type="entry name" value="NAD(P)-binding Rossmann-fold domains"/>
    <property type="match status" value="1"/>
</dbReference>
<sequence length="314" mass="34674">MPMYLLDGKRIWVAGHKGMVGSAIIRSLASEDCEVIVADRQKLDLTRQEEVEKFLLKEKPHAVIMAAAKVGGILANDTMPADFIYQNLIMEANVIEGSFRSGVEKLLFLGSSCIYPKYAAQPIREEALLTGPLEPTNEWYAIAKIAGIKLCQAYRKQYGANFISAMPTNLYGPRDKFDLNSSHVVPALIRKAHEAKIKDLGCLSIWGSGTPTRDFLYSEDCSDALVFLLKHYSETEHINIGSGGEISIIELAHIVCRVVGFKGDIVFDTSKPDGTPRKLLSSERLVSMGWRPKTSLELGLAKSYESFVSNVADN</sequence>